<evidence type="ECO:0000250" key="1">
    <source>
        <dbReference type="UniProtKB" id="P49620"/>
    </source>
</evidence>
<evidence type="ECO:0000250" key="2">
    <source>
        <dbReference type="UniProtKB" id="Q91WG7"/>
    </source>
</evidence>
<evidence type="ECO:0000255" key="3">
    <source>
        <dbReference type="PROSITE-ProRule" id="PRU00226"/>
    </source>
</evidence>
<evidence type="ECO:0000255" key="4">
    <source>
        <dbReference type="PROSITE-ProRule" id="PRU00448"/>
    </source>
</evidence>
<evidence type="ECO:0000255" key="5">
    <source>
        <dbReference type="PROSITE-ProRule" id="PRU00783"/>
    </source>
</evidence>
<evidence type="ECO:0000256" key="6">
    <source>
        <dbReference type="SAM" id="MobiDB-lite"/>
    </source>
</evidence>
<evidence type="ECO:0000269" key="7">
    <source>
    </source>
</evidence>
<evidence type="ECO:0000269" key="8">
    <source>
    </source>
</evidence>
<evidence type="ECO:0000269" key="9">
    <source>
    </source>
</evidence>
<evidence type="ECO:0000269" key="10">
    <source>
    </source>
</evidence>
<evidence type="ECO:0000269" key="11">
    <source>
    </source>
</evidence>
<evidence type="ECO:0000303" key="12">
    <source>
    </source>
</evidence>
<evidence type="ECO:0000305" key="13"/>
<evidence type="ECO:0000305" key="14">
    <source>
    </source>
</evidence>
<organism>
    <name type="scientific">Homo sapiens</name>
    <name type="common">Human</name>
    <dbReference type="NCBI Taxonomy" id="9606"/>
    <lineage>
        <taxon>Eukaryota</taxon>
        <taxon>Metazoa</taxon>
        <taxon>Chordata</taxon>
        <taxon>Craniata</taxon>
        <taxon>Vertebrata</taxon>
        <taxon>Euteleostomi</taxon>
        <taxon>Mammalia</taxon>
        <taxon>Eutheria</taxon>
        <taxon>Euarchontoglires</taxon>
        <taxon>Primates</taxon>
        <taxon>Haplorrhini</taxon>
        <taxon>Catarrhini</taxon>
        <taxon>Hominidae</taxon>
        <taxon>Homo</taxon>
    </lineage>
</organism>
<feature type="chain" id="PRO_0000218459" description="Diacylglycerol kinase gamma">
    <location>
        <begin position="1"/>
        <end position="791"/>
    </location>
</feature>
<feature type="domain" description="EF-hand 1" evidence="4">
    <location>
        <begin position="175"/>
        <end position="210"/>
    </location>
</feature>
<feature type="domain" description="EF-hand 2" evidence="4">
    <location>
        <begin position="220"/>
        <end position="255"/>
    </location>
</feature>
<feature type="domain" description="DAGKc" evidence="5">
    <location>
        <begin position="430"/>
        <end position="564"/>
    </location>
</feature>
<feature type="zinc finger region" description="Phorbol-ester/DAG-type 1" evidence="3">
    <location>
        <begin position="271"/>
        <end position="321"/>
    </location>
</feature>
<feature type="zinc finger region" description="Phorbol-ester/DAG-type 2" evidence="3">
    <location>
        <begin position="336"/>
        <end position="385"/>
    </location>
</feature>
<feature type="region of interest" description="Disordered" evidence="6">
    <location>
        <begin position="82"/>
        <end position="103"/>
    </location>
</feature>
<feature type="region of interest" description="Disordered" evidence="6">
    <location>
        <begin position="117"/>
        <end position="154"/>
    </location>
</feature>
<feature type="region of interest" description="Disordered" evidence="6">
    <location>
        <begin position="768"/>
        <end position="791"/>
    </location>
</feature>
<feature type="compositionally biased region" description="Basic and acidic residues" evidence="6">
    <location>
        <begin position="83"/>
        <end position="92"/>
    </location>
</feature>
<feature type="compositionally biased region" description="Polar residues" evidence="6">
    <location>
        <begin position="94"/>
        <end position="103"/>
    </location>
</feature>
<feature type="binding site" evidence="4">
    <location>
        <position position="188"/>
    </location>
    <ligand>
        <name>Ca(2+)</name>
        <dbReference type="ChEBI" id="CHEBI:29108"/>
        <label>1</label>
    </ligand>
</feature>
<feature type="binding site" evidence="4">
    <location>
        <position position="190"/>
    </location>
    <ligand>
        <name>Ca(2+)</name>
        <dbReference type="ChEBI" id="CHEBI:29108"/>
        <label>1</label>
    </ligand>
</feature>
<feature type="binding site" evidence="4">
    <location>
        <position position="192"/>
    </location>
    <ligand>
        <name>Ca(2+)</name>
        <dbReference type="ChEBI" id="CHEBI:29108"/>
        <label>1</label>
    </ligand>
</feature>
<feature type="binding site" evidence="4">
    <location>
        <position position="199"/>
    </location>
    <ligand>
        <name>Ca(2+)</name>
        <dbReference type="ChEBI" id="CHEBI:29108"/>
        <label>1</label>
    </ligand>
</feature>
<feature type="binding site" evidence="4">
    <location>
        <position position="233"/>
    </location>
    <ligand>
        <name>Ca(2+)</name>
        <dbReference type="ChEBI" id="CHEBI:29108"/>
        <label>2</label>
    </ligand>
</feature>
<feature type="binding site" evidence="4">
    <location>
        <position position="235"/>
    </location>
    <ligand>
        <name>Ca(2+)</name>
        <dbReference type="ChEBI" id="CHEBI:29108"/>
        <label>2</label>
    </ligand>
</feature>
<feature type="binding site" evidence="4">
    <location>
        <position position="237"/>
    </location>
    <ligand>
        <name>Ca(2+)</name>
        <dbReference type="ChEBI" id="CHEBI:29108"/>
        <label>2</label>
    </ligand>
</feature>
<feature type="binding site" evidence="4">
    <location>
        <position position="244"/>
    </location>
    <ligand>
        <name>Ca(2+)</name>
        <dbReference type="ChEBI" id="CHEBI:29108"/>
        <label>2</label>
    </ligand>
</feature>
<feature type="splice variant" id="VSP_039922" description="In isoform 3." evidence="12">
    <location>
        <begin position="334"/>
        <end position="372"/>
    </location>
</feature>
<feature type="splice variant" id="VSP_001267" description="In isoform 2." evidence="12">
    <location>
        <begin position="451"/>
        <end position="475"/>
    </location>
</feature>
<feature type="sequence variant" id="VAR_020259" description="In dbSNP:rs1004588." evidence="8 9">
    <original>T</original>
    <variation>S</variation>
    <location>
        <position position="142"/>
    </location>
</feature>
<feature type="sequence variant" id="VAR_024430" description="In dbSNP:rs2193587." evidence="7 8 9 11">
    <original>R</original>
    <variation>K</variation>
    <location>
        <position position="316"/>
    </location>
</feature>
<feature type="sequence variant" id="VAR_020260" description="In dbSNP:rs3213770.">
    <original>R</original>
    <variation>W</variation>
    <location>
        <position position="370"/>
    </location>
</feature>
<feature type="sequence variant" id="VAR_036119" description="In a breast cancer sample; somatic mutation; dbSNP:rs2108480302." evidence="10">
    <original>E</original>
    <variation>K</variation>
    <location>
        <position position="706"/>
    </location>
</feature>
<feature type="sequence conflict" description="In Ref. 1; BAA05132 and 2; AAC04686." evidence="13" ref="1 2">
    <original>R</original>
    <variation>G</variation>
    <location>
        <position position="271"/>
    </location>
</feature>
<keyword id="KW-0025">Alternative splicing</keyword>
<keyword id="KW-0067">ATP-binding</keyword>
<keyword id="KW-0106">Calcium</keyword>
<keyword id="KW-0963">Cytoplasm</keyword>
<keyword id="KW-0206">Cytoskeleton</keyword>
<keyword id="KW-0418">Kinase</keyword>
<keyword id="KW-0443">Lipid metabolism</keyword>
<keyword id="KW-0472">Membrane</keyword>
<keyword id="KW-0479">Metal-binding</keyword>
<keyword id="KW-0547">Nucleotide-binding</keyword>
<keyword id="KW-1267">Proteomics identification</keyword>
<keyword id="KW-1185">Reference proteome</keyword>
<keyword id="KW-0677">Repeat</keyword>
<keyword id="KW-0808">Transferase</keyword>
<keyword id="KW-0862">Zinc</keyword>
<keyword id="KW-0863">Zinc-finger</keyword>
<accession>P49619</accession>
<accession>B2RAH4</accession>
<accession>Q2M1H4</accession>
<accession>Q5FWG1</accession>
<gene>
    <name type="primary">DGKG</name>
    <name type="synonym">DAGK3</name>
</gene>
<name>DGKG_HUMAN</name>
<proteinExistence type="evidence at protein level"/>
<reference key="1">
    <citation type="journal article" date="1994" name="J. Biol. Chem.">
        <title>Molecular cloning of a diacylglycerol kinase isozyme predominantly expressed in human retina with a truncated and inactive enzyme expression in most other human cells.</title>
        <authorList>
            <person name="Kai M."/>
            <person name="Sakane F."/>
            <person name="Imai S."/>
            <person name="Wada I."/>
            <person name="Kanoh H."/>
        </authorList>
    </citation>
    <scope>NUCLEOTIDE SEQUENCE [MRNA] (ISOFORM 1)</scope>
    <scope>FUNCTION</scope>
    <scope>CATALYTIC ACTIVITY</scope>
    <scope>SUBSTRATE SPECIFICITY</scope>
    <scope>PATHWAY</scope>
    <scope>ACTIVITY REGULATION</scope>
    <scope>SUBCELLULAR LOCATION</scope>
    <scope>VARIANT LYS-316</scope>
    <source>
        <tissue>Liver</tissue>
    </source>
</reference>
<reference key="2">
    <citation type="journal article" date="1999" name="Hum. Genet.">
        <title>Mapping and genomic characterization of the gene encoding diacylglycerol kinase gamma (DAGK3): assessment of its role in dominant optic atrophy (OPA1).</title>
        <authorList>
            <person name="Stoehr H."/>
            <person name="Klein J."/>
            <person name="Gehrig A."/>
            <person name="Koehler M.R."/>
            <person name="Jurklies B."/>
            <person name="Kellner U."/>
            <person name="Leo-Kottler B."/>
            <person name="Schmid M."/>
            <person name="Weber B.H.F."/>
        </authorList>
    </citation>
    <scope>NUCLEOTIDE SEQUENCE [GENOMIC DNA]</scope>
    <scope>VARIANT LYS-316</scope>
</reference>
<reference key="3">
    <citation type="journal article" date="2004" name="Nat. Genet.">
        <title>Complete sequencing and characterization of 21,243 full-length human cDNAs.</title>
        <authorList>
            <person name="Ota T."/>
            <person name="Suzuki Y."/>
            <person name="Nishikawa T."/>
            <person name="Otsuki T."/>
            <person name="Sugiyama T."/>
            <person name="Irie R."/>
            <person name="Wakamatsu A."/>
            <person name="Hayashi K."/>
            <person name="Sato H."/>
            <person name="Nagai K."/>
            <person name="Kimura K."/>
            <person name="Makita H."/>
            <person name="Sekine M."/>
            <person name="Obayashi M."/>
            <person name="Nishi T."/>
            <person name="Shibahara T."/>
            <person name="Tanaka T."/>
            <person name="Ishii S."/>
            <person name="Yamamoto J."/>
            <person name="Saito K."/>
            <person name="Kawai Y."/>
            <person name="Isono Y."/>
            <person name="Nakamura Y."/>
            <person name="Nagahari K."/>
            <person name="Murakami K."/>
            <person name="Yasuda T."/>
            <person name="Iwayanagi T."/>
            <person name="Wagatsuma M."/>
            <person name="Shiratori A."/>
            <person name="Sudo H."/>
            <person name="Hosoiri T."/>
            <person name="Kaku Y."/>
            <person name="Kodaira H."/>
            <person name="Kondo H."/>
            <person name="Sugawara M."/>
            <person name="Takahashi M."/>
            <person name="Kanda K."/>
            <person name="Yokoi T."/>
            <person name="Furuya T."/>
            <person name="Kikkawa E."/>
            <person name="Omura Y."/>
            <person name="Abe K."/>
            <person name="Kamihara K."/>
            <person name="Katsuta N."/>
            <person name="Sato K."/>
            <person name="Tanikawa M."/>
            <person name="Yamazaki M."/>
            <person name="Ninomiya K."/>
            <person name="Ishibashi T."/>
            <person name="Yamashita H."/>
            <person name="Murakawa K."/>
            <person name="Fujimori K."/>
            <person name="Tanai H."/>
            <person name="Kimata M."/>
            <person name="Watanabe M."/>
            <person name="Hiraoka S."/>
            <person name="Chiba Y."/>
            <person name="Ishida S."/>
            <person name="Ono Y."/>
            <person name="Takiguchi S."/>
            <person name="Watanabe S."/>
            <person name="Yosida M."/>
            <person name="Hotuta T."/>
            <person name="Kusano J."/>
            <person name="Kanehori K."/>
            <person name="Takahashi-Fujii A."/>
            <person name="Hara H."/>
            <person name="Tanase T.-O."/>
            <person name="Nomura Y."/>
            <person name="Togiya S."/>
            <person name="Komai F."/>
            <person name="Hara R."/>
            <person name="Takeuchi K."/>
            <person name="Arita M."/>
            <person name="Imose N."/>
            <person name="Musashino K."/>
            <person name="Yuuki H."/>
            <person name="Oshima A."/>
            <person name="Sasaki N."/>
            <person name="Aotsuka S."/>
            <person name="Yoshikawa Y."/>
            <person name="Matsunawa H."/>
            <person name="Ichihara T."/>
            <person name="Shiohata N."/>
            <person name="Sano S."/>
            <person name="Moriya S."/>
            <person name="Momiyama H."/>
            <person name="Satoh N."/>
            <person name="Takami S."/>
            <person name="Terashima Y."/>
            <person name="Suzuki O."/>
            <person name="Nakagawa S."/>
            <person name="Senoh A."/>
            <person name="Mizoguchi H."/>
            <person name="Goto Y."/>
            <person name="Shimizu F."/>
            <person name="Wakebe H."/>
            <person name="Hishigaki H."/>
            <person name="Watanabe T."/>
            <person name="Sugiyama A."/>
            <person name="Takemoto M."/>
            <person name="Kawakami B."/>
            <person name="Yamazaki M."/>
            <person name="Watanabe K."/>
            <person name="Kumagai A."/>
            <person name="Itakura S."/>
            <person name="Fukuzumi Y."/>
            <person name="Fujimori Y."/>
            <person name="Komiyama M."/>
            <person name="Tashiro H."/>
            <person name="Tanigami A."/>
            <person name="Fujiwara T."/>
            <person name="Ono T."/>
            <person name="Yamada K."/>
            <person name="Fujii Y."/>
            <person name="Ozaki K."/>
            <person name="Hirao M."/>
            <person name="Ohmori Y."/>
            <person name="Kawabata A."/>
            <person name="Hikiji T."/>
            <person name="Kobatake N."/>
            <person name="Inagaki H."/>
            <person name="Ikema Y."/>
            <person name="Okamoto S."/>
            <person name="Okitani R."/>
            <person name="Kawakami T."/>
            <person name="Noguchi S."/>
            <person name="Itoh T."/>
            <person name="Shigeta K."/>
            <person name="Senba T."/>
            <person name="Matsumura K."/>
            <person name="Nakajima Y."/>
            <person name="Mizuno T."/>
            <person name="Morinaga M."/>
            <person name="Sasaki M."/>
            <person name="Togashi T."/>
            <person name="Oyama M."/>
            <person name="Hata H."/>
            <person name="Watanabe M."/>
            <person name="Komatsu T."/>
            <person name="Mizushima-Sugano J."/>
            <person name="Satoh T."/>
            <person name="Shirai Y."/>
            <person name="Takahashi Y."/>
            <person name="Nakagawa K."/>
            <person name="Okumura K."/>
            <person name="Nagase T."/>
            <person name="Nomura N."/>
            <person name="Kikuchi H."/>
            <person name="Masuho Y."/>
            <person name="Yamashita R."/>
            <person name="Nakai K."/>
            <person name="Yada T."/>
            <person name="Nakamura Y."/>
            <person name="Ohara O."/>
            <person name="Isogai T."/>
            <person name="Sugano S."/>
        </authorList>
    </citation>
    <scope>NUCLEOTIDE SEQUENCE [LARGE SCALE MRNA] (ISOFORM 1)</scope>
    <scope>VARIANTS SER-142 AND LYS-316</scope>
    <source>
        <tissue>Thalamus</tissue>
    </source>
</reference>
<reference key="4">
    <citation type="journal article" date="2006" name="Nature">
        <title>The DNA sequence, annotation and analysis of human chromosome 3.</title>
        <authorList>
            <person name="Muzny D.M."/>
            <person name="Scherer S.E."/>
            <person name="Kaul R."/>
            <person name="Wang J."/>
            <person name="Yu J."/>
            <person name="Sudbrak R."/>
            <person name="Buhay C.J."/>
            <person name="Chen R."/>
            <person name="Cree A."/>
            <person name="Ding Y."/>
            <person name="Dugan-Rocha S."/>
            <person name="Gill R."/>
            <person name="Gunaratne P."/>
            <person name="Harris R.A."/>
            <person name="Hawes A.C."/>
            <person name="Hernandez J."/>
            <person name="Hodgson A.V."/>
            <person name="Hume J."/>
            <person name="Jackson A."/>
            <person name="Khan Z.M."/>
            <person name="Kovar-Smith C."/>
            <person name="Lewis L.R."/>
            <person name="Lozado R.J."/>
            <person name="Metzker M.L."/>
            <person name="Milosavljevic A."/>
            <person name="Miner G.R."/>
            <person name="Morgan M.B."/>
            <person name="Nazareth L.V."/>
            <person name="Scott G."/>
            <person name="Sodergren E."/>
            <person name="Song X.-Z."/>
            <person name="Steffen D."/>
            <person name="Wei S."/>
            <person name="Wheeler D.A."/>
            <person name="Wright M.W."/>
            <person name="Worley K.C."/>
            <person name="Yuan Y."/>
            <person name="Zhang Z."/>
            <person name="Adams C.Q."/>
            <person name="Ansari-Lari M.A."/>
            <person name="Ayele M."/>
            <person name="Brown M.J."/>
            <person name="Chen G."/>
            <person name="Chen Z."/>
            <person name="Clendenning J."/>
            <person name="Clerc-Blankenburg K.P."/>
            <person name="Chen R."/>
            <person name="Chen Z."/>
            <person name="Davis C."/>
            <person name="Delgado O."/>
            <person name="Dinh H.H."/>
            <person name="Dong W."/>
            <person name="Draper H."/>
            <person name="Ernst S."/>
            <person name="Fu G."/>
            <person name="Gonzalez-Garay M.L."/>
            <person name="Garcia D.K."/>
            <person name="Gillett W."/>
            <person name="Gu J."/>
            <person name="Hao B."/>
            <person name="Haugen E."/>
            <person name="Havlak P."/>
            <person name="He X."/>
            <person name="Hennig S."/>
            <person name="Hu S."/>
            <person name="Huang W."/>
            <person name="Jackson L.R."/>
            <person name="Jacob L.S."/>
            <person name="Kelly S.H."/>
            <person name="Kube M."/>
            <person name="Levy R."/>
            <person name="Li Z."/>
            <person name="Liu B."/>
            <person name="Liu J."/>
            <person name="Liu W."/>
            <person name="Lu J."/>
            <person name="Maheshwari M."/>
            <person name="Nguyen B.-V."/>
            <person name="Okwuonu G.O."/>
            <person name="Palmeiri A."/>
            <person name="Pasternak S."/>
            <person name="Perez L.M."/>
            <person name="Phelps K.A."/>
            <person name="Plopper F.J."/>
            <person name="Qiang B."/>
            <person name="Raymond C."/>
            <person name="Rodriguez R."/>
            <person name="Saenphimmachak C."/>
            <person name="Santibanez J."/>
            <person name="Shen H."/>
            <person name="Shen Y."/>
            <person name="Subramanian S."/>
            <person name="Tabor P.E."/>
            <person name="Verduzco D."/>
            <person name="Waldron L."/>
            <person name="Wang J."/>
            <person name="Wang J."/>
            <person name="Wang Q."/>
            <person name="Williams G.A."/>
            <person name="Wong G.K.-S."/>
            <person name="Yao Z."/>
            <person name="Zhang J."/>
            <person name="Zhang X."/>
            <person name="Zhao G."/>
            <person name="Zhou J."/>
            <person name="Zhou Y."/>
            <person name="Nelson D."/>
            <person name="Lehrach H."/>
            <person name="Reinhardt R."/>
            <person name="Naylor S.L."/>
            <person name="Yang H."/>
            <person name="Olson M."/>
            <person name="Weinstock G."/>
            <person name="Gibbs R.A."/>
        </authorList>
    </citation>
    <scope>NUCLEOTIDE SEQUENCE [LARGE SCALE GENOMIC DNA]</scope>
</reference>
<reference key="5">
    <citation type="journal article" date="2004" name="Genome Res.">
        <title>The status, quality, and expansion of the NIH full-length cDNA project: the Mammalian Gene Collection (MGC).</title>
        <authorList>
            <consortium name="The MGC Project Team"/>
        </authorList>
    </citation>
    <scope>NUCLEOTIDE SEQUENCE [LARGE SCALE MRNA] (ISOFORMS 2 AND 3)</scope>
    <scope>VARIANTS SER-142 AND LYS-316</scope>
    <source>
        <tissue>Lymph</tissue>
    </source>
</reference>
<reference key="6">
    <citation type="journal article" date="2006" name="Science">
        <title>The consensus coding sequences of human breast and colorectal cancers.</title>
        <authorList>
            <person name="Sjoeblom T."/>
            <person name="Jones S."/>
            <person name="Wood L.D."/>
            <person name="Parsons D.W."/>
            <person name="Lin J."/>
            <person name="Barber T.D."/>
            <person name="Mandelker D."/>
            <person name="Leary R.J."/>
            <person name="Ptak J."/>
            <person name="Silliman N."/>
            <person name="Szabo S."/>
            <person name="Buckhaults P."/>
            <person name="Farrell C."/>
            <person name="Meeh P."/>
            <person name="Markowitz S.D."/>
            <person name="Willis J."/>
            <person name="Dawson D."/>
            <person name="Willson J.K.V."/>
            <person name="Gazdar A.F."/>
            <person name="Hartigan J."/>
            <person name="Wu L."/>
            <person name="Liu C."/>
            <person name="Parmigiani G."/>
            <person name="Park B.H."/>
            <person name="Bachman K.E."/>
            <person name="Papadopoulos N."/>
            <person name="Vogelstein B."/>
            <person name="Kinzler K.W."/>
            <person name="Velculescu V.E."/>
        </authorList>
    </citation>
    <scope>VARIANT [LARGE SCALE ANALYSIS] LYS-706</scope>
</reference>
<protein>
    <recommendedName>
        <fullName>Diacylglycerol kinase gamma</fullName>
        <shortName>DAG kinase gamma</shortName>
        <ecNumber evidence="11">2.7.1.107</ecNumber>
    </recommendedName>
    <alternativeName>
        <fullName>Diglyceride kinase gamma</fullName>
        <shortName>DGK-gamma</shortName>
    </alternativeName>
</protein>
<dbReference type="EC" id="2.7.1.107" evidence="11"/>
<dbReference type="EMBL" id="D26135">
    <property type="protein sequence ID" value="BAA05132.1"/>
    <property type="molecule type" value="mRNA"/>
</dbReference>
<dbReference type="EMBL" id="AF020945">
    <property type="protein sequence ID" value="AAC04686.1"/>
    <property type="molecule type" value="Genomic_DNA"/>
</dbReference>
<dbReference type="EMBL" id="AF020922">
    <property type="protein sequence ID" value="AAC04686.1"/>
    <property type="status" value="JOINED"/>
    <property type="molecule type" value="Genomic_DNA"/>
</dbReference>
<dbReference type="EMBL" id="AF020923">
    <property type="protein sequence ID" value="AAC04686.1"/>
    <property type="status" value="JOINED"/>
    <property type="molecule type" value="Genomic_DNA"/>
</dbReference>
<dbReference type="EMBL" id="AF020924">
    <property type="protein sequence ID" value="AAC04686.1"/>
    <property type="status" value="JOINED"/>
    <property type="molecule type" value="Genomic_DNA"/>
</dbReference>
<dbReference type="EMBL" id="AF020925">
    <property type="protein sequence ID" value="AAC04686.1"/>
    <property type="status" value="JOINED"/>
    <property type="molecule type" value="Genomic_DNA"/>
</dbReference>
<dbReference type="EMBL" id="AF020926">
    <property type="protein sequence ID" value="AAC04686.1"/>
    <property type="status" value="JOINED"/>
    <property type="molecule type" value="Genomic_DNA"/>
</dbReference>
<dbReference type="EMBL" id="AF020927">
    <property type="protein sequence ID" value="AAC04686.1"/>
    <property type="status" value="JOINED"/>
    <property type="molecule type" value="Genomic_DNA"/>
</dbReference>
<dbReference type="EMBL" id="AF020928">
    <property type="protein sequence ID" value="AAC04686.1"/>
    <property type="status" value="JOINED"/>
    <property type="molecule type" value="Genomic_DNA"/>
</dbReference>
<dbReference type="EMBL" id="AF020929">
    <property type="protein sequence ID" value="AAC04686.1"/>
    <property type="status" value="JOINED"/>
    <property type="molecule type" value="Genomic_DNA"/>
</dbReference>
<dbReference type="EMBL" id="AF020930">
    <property type="protein sequence ID" value="AAC04686.1"/>
    <property type="status" value="JOINED"/>
    <property type="molecule type" value="Genomic_DNA"/>
</dbReference>
<dbReference type="EMBL" id="AF020931">
    <property type="protein sequence ID" value="AAC04686.1"/>
    <property type="status" value="JOINED"/>
    <property type="molecule type" value="Genomic_DNA"/>
</dbReference>
<dbReference type="EMBL" id="AF020932">
    <property type="protein sequence ID" value="AAC04686.1"/>
    <property type="status" value="JOINED"/>
    <property type="molecule type" value="Genomic_DNA"/>
</dbReference>
<dbReference type="EMBL" id="AF020933">
    <property type="protein sequence ID" value="AAC04686.1"/>
    <property type="status" value="JOINED"/>
    <property type="molecule type" value="Genomic_DNA"/>
</dbReference>
<dbReference type="EMBL" id="AF020934">
    <property type="protein sequence ID" value="AAC04686.1"/>
    <property type="status" value="JOINED"/>
    <property type="molecule type" value="Genomic_DNA"/>
</dbReference>
<dbReference type="EMBL" id="AF020935">
    <property type="protein sequence ID" value="AAC04686.1"/>
    <property type="status" value="JOINED"/>
    <property type="molecule type" value="Genomic_DNA"/>
</dbReference>
<dbReference type="EMBL" id="AF020936">
    <property type="protein sequence ID" value="AAC04686.1"/>
    <property type="status" value="JOINED"/>
    <property type="molecule type" value="Genomic_DNA"/>
</dbReference>
<dbReference type="EMBL" id="AF020937">
    <property type="protein sequence ID" value="AAC04686.1"/>
    <property type="status" value="JOINED"/>
    <property type="molecule type" value="Genomic_DNA"/>
</dbReference>
<dbReference type="EMBL" id="AF020938">
    <property type="protein sequence ID" value="AAC04686.1"/>
    <property type="status" value="JOINED"/>
    <property type="molecule type" value="Genomic_DNA"/>
</dbReference>
<dbReference type="EMBL" id="AF020939">
    <property type="protein sequence ID" value="AAC04686.1"/>
    <property type="status" value="JOINED"/>
    <property type="molecule type" value="Genomic_DNA"/>
</dbReference>
<dbReference type="EMBL" id="AF020940">
    <property type="protein sequence ID" value="AAC04686.1"/>
    <property type="status" value="JOINED"/>
    <property type="molecule type" value="Genomic_DNA"/>
</dbReference>
<dbReference type="EMBL" id="AF020941">
    <property type="protein sequence ID" value="AAC04686.1"/>
    <property type="status" value="JOINED"/>
    <property type="molecule type" value="Genomic_DNA"/>
</dbReference>
<dbReference type="EMBL" id="AF020942">
    <property type="protein sequence ID" value="AAC04686.1"/>
    <property type="status" value="JOINED"/>
    <property type="molecule type" value="Genomic_DNA"/>
</dbReference>
<dbReference type="EMBL" id="AF020943">
    <property type="protein sequence ID" value="AAC04686.1"/>
    <property type="status" value="JOINED"/>
    <property type="molecule type" value="Genomic_DNA"/>
</dbReference>
<dbReference type="EMBL" id="AF020944">
    <property type="protein sequence ID" value="AAC04686.1"/>
    <property type="status" value="JOINED"/>
    <property type="molecule type" value="Genomic_DNA"/>
</dbReference>
<dbReference type="EMBL" id="AK314192">
    <property type="protein sequence ID" value="BAG36871.1"/>
    <property type="molecule type" value="mRNA"/>
</dbReference>
<dbReference type="EMBL" id="AC007917">
    <property type="status" value="NOT_ANNOTATED_CDS"/>
    <property type="molecule type" value="Genomic_DNA"/>
</dbReference>
<dbReference type="EMBL" id="AC112649">
    <property type="status" value="NOT_ANNOTATED_CDS"/>
    <property type="molecule type" value="Genomic_DNA"/>
</dbReference>
<dbReference type="EMBL" id="BC089411">
    <property type="protein sequence ID" value="AAH89411.1"/>
    <property type="molecule type" value="mRNA"/>
</dbReference>
<dbReference type="EMBL" id="BC112363">
    <property type="protein sequence ID" value="AAI12364.1"/>
    <property type="molecule type" value="mRNA"/>
</dbReference>
<dbReference type="CCDS" id="CCDS3274.1">
    <molecule id="P49619-1"/>
</dbReference>
<dbReference type="CCDS" id="CCDS43181.1">
    <molecule id="P49619-3"/>
</dbReference>
<dbReference type="CCDS" id="CCDS43182.1">
    <molecule id="P49619-2"/>
</dbReference>
<dbReference type="PIR" id="A53691">
    <property type="entry name" value="A53691"/>
</dbReference>
<dbReference type="RefSeq" id="NP_001074213.1">
    <molecule id="P49619-2"/>
    <property type="nucleotide sequence ID" value="NM_001080744.2"/>
</dbReference>
<dbReference type="RefSeq" id="NP_001074214.1">
    <molecule id="P49619-3"/>
    <property type="nucleotide sequence ID" value="NM_001080745.2"/>
</dbReference>
<dbReference type="RefSeq" id="NP_001337.2">
    <molecule id="P49619-1"/>
    <property type="nucleotide sequence ID" value="NM_001346.3"/>
</dbReference>
<dbReference type="BioGRID" id="107978">
    <property type="interactions" value="26"/>
</dbReference>
<dbReference type="FunCoup" id="P49619">
    <property type="interactions" value="723"/>
</dbReference>
<dbReference type="IntAct" id="P49619">
    <property type="interactions" value="22"/>
</dbReference>
<dbReference type="STRING" id="9606.ENSP00000265022"/>
<dbReference type="BindingDB" id="P49619"/>
<dbReference type="ChEMBL" id="CHEMBL1075157"/>
<dbReference type="DrugBank" id="DB14001">
    <property type="generic name" value="alpha-Tocopherol succinate"/>
</dbReference>
<dbReference type="DrugBank" id="DB00144">
    <property type="generic name" value="Phosphatidyl serine"/>
</dbReference>
<dbReference type="SwissLipids" id="SLP:000000923"/>
<dbReference type="SwissLipids" id="SLP:000000938">
    <molecule id="P49619-1"/>
</dbReference>
<dbReference type="GlyGen" id="P49619">
    <property type="glycosylation" value="2 sites"/>
</dbReference>
<dbReference type="iPTMnet" id="P49619"/>
<dbReference type="PhosphoSitePlus" id="P49619"/>
<dbReference type="BioMuta" id="DGKG"/>
<dbReference type="DMDM" id="311033457"/>
<dbReference type="jPOST" id="P49619"/>
<dbReference type="MassIVE" id="P49619"/>
<dbReference type="PaxDb" id="9606-ENSP00000265022"/>
<dbReference type="PeptideAtlas" id="P49619"/>
<dbReference type="ProteomicsDB" id="56029">
    <molecule id="P49619-1"/>
</dbReference>
<dbReference type="ProteomicsDB" id="56030">
    <molecule id="P49619-2"/>
</dbReference>
<dbReference type="ProteomicsDB" id="56031">
    <molecule id="P49619-3"/>
</dbReference>
<dbReference type="Antibodypedia" id="34852">
    <property type="antibodies" value="118 antibodies from 17 providers"/>
</dbReference>
<dbReference type="DNASU" id="1608"/>
<dbReference type="Ensembl" id="ENST00000265022.8">
    <molecule id="P49619-1"/>
    <property type="protein sequence ID" value="ENSP00000265022.3"/>
    <property type="gene ID" value="ENSG00000058866.15"/>
</dbReference>
<dbReference type="Ensembl" id="ENST00000344484.8">
    <molecule id="P49619-2"/>
    <property type="protein sequence ID" value="ENSP00000339777.4"/>
    <property type="gene ID" value="ENSG00000058866.15"/>
</dbReference>
<dbReference type="Ensembl" id="ENST00000382164.8">
    <molecule id="P49619-3"/>
    <property type="protein sequence ID" value="ENSP00000371599.4"/>
    <property type="gene ID" value="ENSG00000058866.15"/>
</dbReference>
<dbReference type="GeneID" id="1608"/>
<dbReference type="KEGG" id="hsa:1608"/>
<dbReference type="MANE-Select" id="ENST00000265022.8">
    <property type="protein sequence ID" value="ENSP00000265022.3"/>
    <property type="RefSeq nucleotide sequence ID" value="NM_001346.3"/>
    <property type="RefSeq protein sequence ID" value="NP_001337.2"/>
</dbReference>
<dbReference type="UCSC" id="uc003fqa.4">
    <molecule id="P49619-1"/>
    <property type="organism name" value="human"/>
</dbReference>
<dbReference type="AGR" id="HGNC:2853"/>
<dbReference type="CTD" id="1608"/>
<dbReference type="DisGeNET" id="1608"/>
<dbReference type="GeneCards" id="DGKG"/>
<dbReference type="HGNC" id="HGNC:2853">
    <property type="gene designation" value="DGKG"/>
</dbReference>
<dbReference type="HPA" id="ENSG00000058866">
    <property type="expression patterns" value="Tissue enhanced (brain)"/>
</dbReference>
<dbReference type="MIM" id="601854">
    <property type="type" value="gene"/>
</dbReference>
<dbReference type="neXtProt" id="NX_P49619"/>
<dbReference type="OpenTargets" id="ENSG00000058866"/>
<dbReference type="PharmGKB" id="PA27314"/>
<dbReference type="VEuPathDB" id="HostDB:ENSG00000058866"/>
<dbReference type="eggNOG" id="KOG1169">
    <property type="taxonomic scope" value="Eukaryota"/>
</dbReference>
<dbReference type="GeneTree" id="ENSGT00940000156768"/>
<dbReference type="HOGENOM" id="CLU_003770_1_0_1"/>
<dbReference type="InParanoid" id="P49619"/>
<dbReference type="OMA" id="GPDTNIQ"/>
<dbReference type="OrthoDB" id="242257at2759"/>
<dbReference type="PAN-GO" id="P49619">
    <property type="GO annotations" value="5 GO annotations based on evolutionary models"/>
</dbReference>
<dbReference type="PhylomeDB" id="P49619"/>
<dbReference type="TreeFam" id="TF313104"/>
<dbReference type="BRENDA" id="2.7.1.107">
    <property type="organism ID" value="2681"/>
</dbReference>
<dbReference type="PathwayCommons" id="P49619"/>
<dbReference type="Reactome" id="R-HSA-114508">
    <property type="pathway name" value="Effects of PIP2 hydrolysis"/>
</dbReference>
<dbReference type="SABIO-RK" id="P49619"/>
<dbReference type="SignaLink" id="P49619"/>
<dbReference type="SIGNOR" id="P49619"/>
<dbReference type="UniPathway" id="UPA00230"/>
<dbReference type="BioGRID-ORCS" id="1608">
    <property type="hits" value="12 hits in 1144 CRISPR screens"/>
</dbReference>
<dbReference type="ChiTaRS" id="DGKG">
    <property type="organism name" value="human"/>
</dbReference>
<dbReference type="GeneWiki" id="DGKG"/>
<dbReference type="GenomeRNAi" id="1608"/>
<dbReference type="Pharos" id="P49619">
    <property type="development level" value="Tbio"/>
</dbReference>
<dbReference type="PRO" id="PR:P49619"/>
<dbReference type="Proteomes" id="UP000005640">
    <property type="component" value="Chromosome 3"/>
</dbReference>
<dbReference type="RNAct" id="P49619">
    <property type="molecule type" value="protein"/>
</dbReference>
<dbReference type="Bgee" id="ENSG00000058866">
    <property type="expression patterns" value="Expressed in cerebellar cortex and 107 other cell types or tissues"/>
</dbReference>
<dbReference type="ExpressionAtlas" id="P49619">
    <property type="expression patterns" value="baseline and differential"/>
</dbReference>
<dbReference type="GO" id="GO:0005856">
    <property type="term" value="C:cytoskeleton"/>
    <property type="evidence" value="ECO:0007669"/>
    <property type="project" value="UniProtKB-SubCell"/>
</dbReference>
<dbReference type="GO" id="GO:0005829">
    <property type="term" value="C:cytosol"/>
    <property type="evidence" value="ECO:0000314"/>
    <property type="project" value="UniProtKB"/>
</dbReference>
<dbReference type="GO" id="GO:0016020">
    <property type="term" value="C:membrane"/>
    <property type="evidence" value="ECO:0000314"/>
    <property type="project" value="UniProtKB"/>
</dbReference>
<dbReference type="GO" id="GO:0005886">
    <property type="term" value="C:plasma membrane"/>
    <property type="evidence" value="ECO:0000318"/>
    <property type="project" value="GO_Central"/>
</dbReference>
<dbReference type="GO" id="GO:0005524">
    <property type="term" value="F:ATP binding"/>
    <property type="evidence" value="ECO:0007669"/>
    <property type="project" value="UniProtKB-KW"/>
</dbReference>
<dbReference type="GO" id="GO:0004143">
    <property type="term" value="F:ATP-dependent diacylglycerol kinase activity"/>
    <property type="evidence" value="ECO:0000314"/>
    <property type="project" value="UniProtKB"/>
</dbReference>
<dbReference type="GO" id="GO:0005509">
    <property type="term" value="F:calcium ion binding"/>
    <property type="evidence" value="ECO:0007669"/>
    <property type="project" value="InterPro"/>
</dbReference>
<dbReference type="GO" id="GO:0008289">
    <property type="term" value="F:lipid binding"/>
    <property type="evidence" value="ECO:0000314"/>
    <property type="project" value="BHF-UCL"/>
</dbReference>
<dbReference type="GO" id="GO:0008270">
    <property type="term" value="F:zinc ion binding"/>
    <property type="evidence" value="ECO:0007669"/>
    <property type="project" value="UniProtKB-KW"/>
</dbReference>
<dbReference type="GO" id="GO:0046339">
    <property type="term" value="P:diacylglycerol metabolic process"/>
    <property type="evidence" value="ECO:0000314"/>
    <property type="project" value="UniProtKB"/>
</dbReference>
<dbReference type="GO" id="GO:0046486">
    <property type="term" value="P:glycerolipid metabolic process"/>
    <property type="evidence" value="ECO:0000314"/>
    <property type="project" value="BHF-UCL"/>
</dbReference>
<dbReference type="GO" id="GO:0035556">
    <property type="term" value="P:intracellular signal transduction"/>
    <property type="evidence" value="ECO:0000318"/>
    <property type="project" value="GO_Central"/>
</dbReference>
<dbReference type="GO" id="GO:0046834">
    <property type="term" value="P:lipid phosphorylation"/>
    <property type="evidence" value="ECO:0000314"/>
    <property type="project" value="UniProtKB"/>
</dbReference>
<dbReference type="GO" id="GO:0160195">
    <property type="term" value="P:negative regulation of phospholipase C/protein kinase C signal transduction"/>
    <property type="evidence" value="ECO:0000250"/>
    <property type="project" value="UniProtKB"/>
</dbReference>
<dbReference type="GO" id="GO:0006654">
    <property type="term" value="P:phosphatidic acid biosynthetic process"/>
    <property type="evidence" value="ECO:0000314"/>
    <property type="project" value="UniProtKB"/>
</dbReference>
<dbReference type="GO" id="GO:0007200">
    <property type="term" value="P:phospholipase C-activating G protein-coupled receptor signaling pathway"/>
    <property type="evidence" value="ECO:0007669"/>
    <property type="project" value="InterPro"/>
</dbReference>
<dbReference type="GO" id="GO:0030168">
    <property type="term" value="P:platelet activation"/>
    <property type="evidence" value="ECO:0000304"/>
    <property type="project" value="Reactome"/>
</dbReference>
<dbReference type="GO" id="GO:0050773">
    <property type="term" value="P:regulation of dendrite development"/>
    <property type="evidence" value="ECO:0007669"/>
    <property type="project" value="Ensembl"/>
</dbReference>
<dbReference type="CDD" id="cd20892">
    <property type="entry name" value="C1_DGKgamma_rpt2"/>
    <property type="match status" value="1"/>
</dbReference>
<dbReference type="CDD" id="cd00051">
    <property type="entry name" value="EFh"/>
    <property type="match status" value="1"/>
</dbReference>
<dbReference type="FunFam" id="1.10.238.10:FF:000017">
    <property type="entry name" value="Diacylglycerol kinase"/>
    <property type="match status" value="1"/>
</dbReference>
<dbReference type="FunFam" id="1.10.238.110:FF:000002">
    <property type="entry name" value="Diacylglycerol kinase"/>
    <property type="match status" value="1"/>
</dbReference>
<dbReference type="FunFam" id="1.10.238.110:FF:000005">
    <property type="entry name" value="Diacylglycerol kinase"/>
    <property type="match status" value="1"/>
</dbReference>
<dbReference type="FunFam" id="2.60.200.40:FF:000003">
    <property type="entry name" value="Diacylglycerol kinase"/>
    <property type="match status" value="1"/>
</dbReference>
<dbReference type="FunFam" id="3.30.60.20:FF:000043">
    <property type="entry name" value="Diacylglycerol kinase"/>
    <property type="match status" value="1"/>
</dbReference>
<dbReference type="FunFam" id="3.30.60.20:FF:000066">
    <property type="entry name" value="Diacylglycerol kinase"/>
    <property type="match status" value="1"/>
</dbReference>
<dbReference type="FunFam" id="3.40.50.10330:FF:000003">
    <property type="entry name" value="Diacylglycerol kinase"/>
    <property type="match status" value="1"/>
</dbReference>
<dbReference type="Gene3D" id="2.60.200.40">
    <property type="match status" value="1"/>
</dbReference>
<dbReference type="Gene3D" id="3.30.60.20">
    <property type="match status" value="2"/>
</dbReference>
<dbReference type="Gene3D" id="1.10.238.110">
    <property type="entry name" value="Diacylglycerol kinase alpha"/>
    <property type="match status" value="2"/>
</dbReference>
<dbReference type="Gene3D" id="1.10.238.10">
    <property type="entry name" value="EF-hand"/>
    <property type="match status" value="1"/>
</dbReference>
<dbReference type="Gene3D" id="3.40.50.10330">
    <property type="entry name" value="Probable inorganic polyphosphate/atp-NAD kinase, domain 1"/>
    <property type="match status" value="1"/>
</dbReference>
<dbReference type="InterPro" id="IPR017438">
    <property type="entry name" value="ATP-NAD_kinase_N"/>
</dbReference>
<dbReference type="InterPro" id="IPR046349">
    <property type="entry name" value="C1-like_sf"/>
</dbReference>
<dbReference type="InterPro" id="IPR047475">
    <property type="entry name" value="C1_DGKgamma_rpt2"/>
</dbReference>
<dbReference type="InterPro" id="IPR029477">
    <property type="entry name" value="DAG_kinase_typeI_N"/>
</dbReference>
<dbReference type="InterPro" id="IPR037607">
    <property type="entry name" value="DGK"/>
</dbReference>
<dbReference type="InterPro" id="IPR038199">
    <property type="entry name" value="DGK_typeI_N_sf"/>
</dbReference>
<dbReference type="InterPro" id="IPR000756">
    <property type="entry name" value="Diacylglycerol_kin_accessory"/>
</dbReference>
<dbReference type="InterPro" id="IPR001206">
    <property type="entry name" value="Diacylglycerol_kinase_cat_dom"/>
</dbReference>
<dbReference type="InterPro" id="IPR011992">
    <property type="entry name" value="EF-hand-dom_pair"/>
</dbReference>
<dbReference type="InterPro" id="IPR018247">
    <property type="entry name" value="EF_Hand_1_Ca_BS"/>
</dbReference>
<dbReference type="InterPro" id="IPR002048">
    <property type="entry name" value="EF_hand_dom"/>
</dbReference>
<dbReference type="InterPro" id="IPR016064">
    <property type="entry name" value="NAD/diacylglycerol_kinase_sf"/>
</dbReference>
<dbReference type="InterPro" id="IPR002219">
    <property type="entry name" value="PE/DAG-bd"/>
</dbReference>
<dbReference type="PANTHER" id="PTHR11255">
    <property type="entry name" value="DIACYLGLYCEROL KINASE"/>
    <property type="match status" value="1"/>
</dbReference>
<dbReference type="PANTHER" id="PTHR11255:SF36">
    <property type="entry name" value="DIACYLGLYCEROL KINASE GAMMA"/>
    <property type="match status" value="1"/>
</dbReference>
<dbReference type="Pfam" id="PF00130">
    <property type="entry name" value="C1_1"/>
    <property type="match status" value="1"/>
</dbReference>
<dbReference type="Pfam" id="PF14513">
    <property type="entry name" value="DAG_kinase_N"/>
    <property type="match status" value="1"/>
</dbReference>
<dbReference type="Pfam" id="PF00609">
    <property type="entry name" value="DAGK_acc"/>
    <property type="match status" value="1"/>
</dbReference>
<dbReference type="Pfam" id="PF00781">
    <property type="entry name" value="DAGK_cat"/>
    <property type="match status" value="1"/>
</dbReference>
<dbReference type="Pfam" id="PF13499">
    <property type="entry name" value="EF-hand_7"/>
    <property type="match status" value="1"/>
</dbReference>
<dbReference type="SMART" id="SM00109">
    <property type="entry name" value="C1"/>
    <property type="match status" value="2"/>
</dbReference>
<dbReference type="SMART" id="SM00045">
    <property type="entry name" value="DAGKa"/>
    <property type="match status" value="1"/>
</dbReference>
<dbReference type="SMART" id="SM00046">
    <property type="entry name" value="DAGKc"/>
    <property type="match status" value="1"/>
</dbReference>
<dbReference type="SMART" id="SM00054">
    <property type="entry name" value="EFh"/>
    <property type="match status" value="2"/>
</dbReference>
<dbReference type="SUPFAM" id="SSF57889">
    <property type="entry name" value="Cysteine-rich domain"/>
    <property type="match status" value="2"/>
</dbReference>
<dbReference type="SUPFAM" id="SSF47473">
    <property type="entry name" value="EF-hand"/>
    <property type="match status" value="2"/>
</dbReference>
<dbReference type="SUPFAM" id="SSF111331">
    <property type="entry name" value="NAD kinase/diacylglycerol kinase-like"/>
    <property type="match status" value="1"/>
</dbReference>
<dbReference type="PROSITE" id="PS50146">
    <property type="entry name" value="DAGK"/>
    <property type="match status" value="1"/>
</dbReference>
<dbReference type="PROSITE" id="PS00018">
    <property type="entry name" value="EF_HAND_1"/>
    <property type="match status" value="2"/>
</dbReference>
<dbReference type="PROSITE" id="PS50222">
    <property type="entry name" value="EF_HAND_2"/>
    <property type="match status" value="2"/>
</dbReference>
<dbReference type="PROSITE" id="PS00479">
    <property type="entry name" value="ZF_DAG_PE_1"/>
    <property type="match status" value="2"/>
</dbReference>
<dbReference type="PROSITE" id="PS50081">
    <property type="entry name" value="ZF_DAG_PE_2"/>
    <property type="match status" value="2"/>
</dbReference>
<comment type="function">
    <text evidence="2 11">Diacylglycerol kinase that converts diacylglycerol/DAG into phosphatidic acid/phosphatidate/PA and regulates the respective levels of these two bioactive lipids (PubMed:8034597). Thereby, acts as a central switch between the signaling pathways activated by these second messengers with different cellular targets and opposite effects in numerous biological processes (By similarity). Has no apparent specificity with regard to the acyl compositions of diacylglycerol (PubMed:8034597). Specifically expressed in the cerebellum where it controls the level of diacylglycerol which in turn regulates the activity of protein kinase C gamma. Through protein kinase C gamma, indirectly regulates the dendritic development of Purkinje cells, cerebellar long term depression and ultimately cerebellar motor coordination (By similarity).</text>
</comment>
<comment type="catalytic activity">
    <reaction evidence="11">
        <text>a 1,2-diacyl-sn-glycerol + ATP = a 1,2-diacyl-sn-glycero-3-phosphate + ADP + H(+)</text>
        <dbReference type="Rhea" id="RHEA:10272"/>
        <dbReference type="ChEBI" id="CHEBI:15378"/>
        <dbReference type="ChEBI" id="CHEBI:17815"/>
        <dbReference type="ChEBI" id="CHEBI:30616"/>
        <dbReference type="ChEBI" id="CHEBI:58608"/>
        <dbReference type="ChEBI" id="CHEBI:456216"/>
        <dbReference type="EC" id="2.7.1.107"/>
    </reaction>
    <physiologicalReaction direction="left-to-right" evidence="14">
        <dbReference type="Rhea" id="RHEA:10273"/>
    </physiologicalReaction>
</comment>
<comment type="catalytic activity">
    <reaction evidence="11">
        <text>1,2-didecanoyl-sn-glycerol + ATP = 1,2-didecanoyl-sn-glycero-3-phosphate + ADP + H(+)</text>
        <dbReference type="Rhea" id="RHEA:43428"/>
        <dbReference type="ChEBI" id="CHEBI:15378"/>
        <dbReference type="ChEBI" id="CHEBI:18155"/>
        <dbReference type="ChEBI" id="CHEBI:30616"/>
        <dbReference type="ChEBI" id="CHEBI:78227"/>
        <dbReference type="ChEBI" id="CHEBI:456216"/>
    </reaction>
    <physiologicalReaction direction="left-to-right" evidence="14">
        <dbReference type="Rhea" id="RHEA:43429"/>
    </physiologicalReaction>
</comment>
<comment type="catalytic activity">
    <reaction evidence="11">
        <text>1-octadecanoyl-2-(5Z,8Z,11Z,14Z-eicosatetraenoyl)-sn-glycerol + ATP = 1-octadecanoyl-2-(5Z,8Z,11Z,14Z-eicosatetraenoyl)-sn-glycero-3-phosphate + ADP + H(+)</text>
        <dbReference type="Rhea" id="RHEA:40323"/>
        <dbReference type="ChEBI" id="CHEBI:15378"/>
        <dbReference type="ChEBI" id="CHEBI:30616"/>
        <dbReference type="ChEBI" id="CHEBI:75728"/>
        <dbReference type="ChEBI" id="CHEBI:77091"/>
        <dbReference type="ChEBI" id="CHEBI:456216"/>
    </reaction>
    <physiologicalReaction direction="left-to-right" evidence="14">
        <dbReference type="Rhea" id="RHEA:40324"/>
    </physiologicalReaction>
</comment>
<comment type="catalytic activity">
    <reaction evidence="11">
        <text>1,2-di-(9Z-octadecenoyl)-sn-glycerol + ATP = 1,2-di-(9Z-octadecenoyl)-sn-glycero-3-phosphate + ADP + H(+)</text>
        <dbReference type="Rhea" id="RHEA:40327"/>
        <dbReference type="ChEBI" id="CHEBI:15378"/>
        <dbReference type="ChEBI" id="CHEBI:30616"/>
        <dbReference type="ChEBI" id="CHEBI:52333"/>
        <dbReference type="ChEBI" id="CHEBI:74546"/>
        <dbReference type="ChEBI" id="CHEBI:456216"/>
    </reaction>
    <physiologicalReaction direction="left-to-right" evidence="14">
        <dbReference type="Rhea" id="RHEA:40328"/>
    </physiologicalReaction>
</comment>
<comment type="catalytic activity">
    <reaction evidence="1">
        <text>1-octadecanoyl-2-(9Z,12Z)-octadecadienoyl-sn-glycerol + ATP = 1-octadecanoyl-2-(9Z,12Z-octadecadienoyl)-sn-glycero-3-phosphate + ADP + H(+)</text>
        <dbReference type="Rhea" id="RHEA:40339"/>
        <dbReference type="ChEBI" id="CHEBI:15378"/>
        <dbReference type="ChEBI" id="CHEBI:30616"/>
        <dbReference type="ChEBI" id="CHEBI:77097"/>
        <dbReference type="ChEBI" id="CHEBI:77098"/>
        <dbReference type="ChEBI" id="CHEBI:456216"/>
    </reaction>
    <physiologicalReaction direction="left-to-right" evidence="1">
        <dbReference type="Rhea" id="RHEA:40340"/>
    </physiologicalReaction>
</comment>
<comment type="activity regulation">
    <text evidence="1 11">The activity is calcium-dependent (By similarity). Requires phosphatidylserine for maximal activity (PubMed:8034597).</text>
</comment>
<comment type="pathway">
    <text evidence="14">Lipid metabolism; glycerolipid metabolism.</text>
</comment>
<comment type="subcellular location">
    <subcellularLocation>
        <location evidence="11">Membrane</location>
    </subcellularLocation>
    <subcellularLocation>
        <location evidence="11">Cytoplasm</location>
        <location evidence="11">Cytosol</location>
    </subcellularLocation>
    <subcellularLocation>
        <location evidence="1">Cytoplasm</location>
        <location evidence="1">Cytoskeleton</location>
    </subcellularLocation>
</comment>
<comment type="alternative products">
    <event type="alternative splicing"/>
    <isoform>
        <id>P49619-1</id>
        <name>1</name>
        <name>Long</name>
        <sequence type="displayed"/>
    </isoform>
    <isoform>
        <id>P49619-2</id>
        <name>2</name>
        <name>Short</name>
        <sequence type="described" ref="VSP_001267"/>
    </isoform>
    <isoform>
        <id>P49619-3</id>
        <name>3</name>
        <sequence type="described" ref="VSP_039922"/>
    </isoform>
</comment>
<comment type="tissue specificity">
    <text>Predominantly expressed in retina and in a much lesser extent in the brain. Other tissues contain extremely low levels of DGK-gamma.</text>
</comment>
<comment type="miscellaneous">
    <molecule>Isoform 2</molecule>
    <text evidence="13">May be inactive.</text>
</comment>
<comment type="similarity">
    <text evidence="13">Belongs to the eukaryotic diacylglycerol kinase family.</text>
</comment>
<sequence length="791" mass="89124">MGEERWVSLTPEEFDQLQKYSEYSSKKIKDALTEFNEGGSLKQYDPHEPISYDVFKLFMRAYLEVDLPQPLSTHLFLAFSQKPRHETSDHPTEGASNSEANSADTNIQNADNATKADEACAPDTESNMAEKQAPAEDQVAATPLEPPVPRSSSSESPVVYLKDVVCYLSLLETGRPQDKLEFMFRLYDSDENGLLDQAEMDCIVNQMLHIAQYLEWDPTELRPILKEMLQGMDYDRDGFVSLQEWVHGGMTTIPLLVLLGMDDSGSKGDGRHAWTMKHFKKPTYCNFCHIMLMGVRKQGLCCTYCKYTVHERCVSRNIPGCVKTYSKAKRSGEVMQHAWVEGNSSVKCDRCHKSIKCYQSVTARHCVWCRMTFHRKCELSTLCDGGELRDHILLPTSICPITRDRPGEKSDGCVSAKGELVMQYKIIPTPGTHPLLVLVNPKSGGRQGERILRKFHYLLNPKQVFNLDNGGPTPGLNFFRDTPDFRVLACGGDGTVGWILDCIDKANFAKHPPVAVLPLGTGNDLARCLRWGGGYEGGSLTKILKDIEQSPLVMLDRWHLEVIPREEVENGDQVPYSIMNNYFSIGVDASIAHRFHVMREKHPEKFNSRMKNKLWYFEFGTSETFAATCKKLHDHIELECDGVGVDLSNIFLEGIAILNIPSMYGGTNLWGENKKNRAVIRESRKGVTDPKELKFCVQDLSDQLLEVVGLEGAMEMGQIYTGLKSAGRRLAQCASVTIRTNKLLPMQVDGEPWMQPCCTIKITHKNQAPMMMGPPQKSSFFSLRRKSRSKD</sequence>